<dbReference type="EC" id="3.1.3.5" evidence="1"/>
<dbReference type="EMBL" id="CP001011">
    <property type="protein sequence ID" value="ACB93318.1"/>
    <property type="molecule type" value="Genomic_DNA"/>
</dbReference>
<dbReference type="RefSeq" id="WP_004084374.1">
    <property type="nucleotide sequence ID" value="NC_010577.1"/>
</dbReference>
<dbReference type="SMR" id="B2I8X7"/>
<dbReference type="GeneID" id="93905670"/>
<dbReference type="KEGG" id="xfn:XfasM23_1918"/>
<dbReference type="HOGENOM" id="CLU_045192_1_2_6"/>
<dbReference type="Proteomes" id="UP000001698">
    <property type="component" value="Chromosome"/>
</dbReference>
<dbReference type="GO" id="GO:0005737">
    <property type="term" value="C:cytoplasm"/>
    <property type="evidence" value="ECO:0007669"/>
    <property type="project" value="UniProtKB-SubCell"/>
</dbReference>
<dbReference type="GO" id="GO:0008254">
    <property type="term" value="F:3'-nucleotidase activity"/>
    <property type="evidence" value="ECO:0007669"/>
    <property type="project" value="TreeGrafter"/>
</dbReference>
<dbReference type="GO" id="GO:0008253">
    <property type="term" value="F:5'-nucleotidase activity"/>
    <property type="evidence" value="ECO:0007669"/>
    <property type="project" value="UniProtKB-UniRule"/>
</dbReference>
<dbReference type="GO" id="GO:0004309">
    <property type="term" value="F:exopolyphosphatase activity"/>
    <property type="evidence" value="ECO:0007669"/>
    <property type="project" value="TreeGrafter"/>
</dbReference>
<dbReference type="GO" id="GO:0046872">
    <property type="term" value="F:metal ion binding"/>
    <property type="evidence" value="ECO:0007669"/>
    <property type="project" value="UniProtKB-UniRule"/>
</dbReference>
<dbReference type="GO" id="GO:0000166">
    <property type="term" value="F:nucleotide binding"/>
    <property type="evidence" value="ECO:0007669"/>
    <property type="project" value="UniProtKB-KW"/>
</dbReference>
<dbReference type="FunFam" id="3.40.1210.10:FF:000001">
    <property type="entry name" value="5'/3'-nucleotidase SurE"/>
    <property type="match status" value="1"/>
</dbReference>
<dbReference type="Gene3D" id="3.40.1210.10">
    <property type="entry name" value="Survival protein SurE-like phosphatase/nucleotidase"/>
    <property type="match status" value="1"/>
</dbReference>
<dbReference type="HAMAP" id="MF_00060">
    <property type="entry name" value="SurE"/>
    <property type="match status" value="1"/>
</dbReference>
<dbReference type="InterPro" id="IPR030048">
    <property type="entry name" value="SurE"/>
</dbReference>
<dbReference type="InterPro" id="IPR002828">
    <property type="entry name" value="SurE-like_Pase/nucleotidase"/>
</dbReference>
<dbReference type="InterPro" id="IPR036523">
    <property type="entry name" value="SurE-like_sf"/>
</dbReference>
<dbReference type="NCBIfam" id="NF001489">
    <property type="entry name" value="PRK00346.1-3"/>
    <property type="match status" value="1"/>
</dbReference>
<dbReference type="NCBIfam" id="NF001490">
    <property type="entry name" value="PRK00346.1-4"/>
    <property type="match status" value="1"/>
</dbReference>
<dbReference type="NCBIfam" id="TIGR00087">
    <property type="entry name" value="surE"/>
    <property type="match status" value="1"/>
</dbReference>
<dbReference type="PANTHER" id="PTHR30457">
    <property type="entry name" value="5'-NUCLEOTIDASE SURE"/>
    <property type="match status" value="1"/>
</dbReference>
<dbReference type="PANTHER" id="PTHR30457:SF12">
    <property type="entry name" value="5'_3'-NUCLEOTIDASE SURE"/>
    <property type="match status" value="1"/>
</dbReference>
<dbReference type="Pfam" id="PF01975">
    <property type="entry name" value="SurE"/>
    <property type="match status" value="1"/>
</dbReference>
<dbReference type="SUPFAM" id="SSF64167">
    <property type="entry name" value="SurE-like"/>
    <property type="match status" value="1"/>
</dbReference>
<comment type="function">
    <text evidence="1">Nucleotidase that shows phosphatase activity on nucleoside 5'-monophosphates.</text>
</comment>
<comment type="catalytic activity">
    <reaction evidence="1">
        <text>a ribonucleoside 5'-phosphate + H2O = a ribonucleoside + phosphate</text>
        <dbReference type="Rhea" id="RHEA:12484"/>
        <dbReference type="ChEBI" id="CHEBI:15377"/>
        <dbReference type="ChEBI" id="CHEBI:18254"/>
        <dbReference type="ChEBI" id="CHEBI:43474"/>
        <dbReference type="ChEBI" id="CHEBI:58043"/>
        <dbReference type="EC" id="3.1.3.5"/>
    </reaction>
</comment>
<comment type="cofactor">
    <cofactor evidence="1">
        <name>a divalent metal cation</name>
        <dbReference type="ChEBI" id="CHEBI:60240"/>
    </cofactor>
    <text evidence="1">Binds 1 divalent metal cation per subunit.</text>
</comment>
<comment type="subcellular location">
    <subcellularLocation>
        <location evidence="1">Cytoplasm</location>
    </subcellularLocation>
</comment>
<comment type="similarity">
    <text evidence="1">Belongs to the SurE nucleotidase family.</text>
</comment>
<protein>
    <recommendedName>
        <fullName evidence="1">5'-nucleotidase SurE</fullName>
        <ecNumber evidence="1">3.1.3.5</ecNumber>
    </recommendedName>
    <alternativeName>
        <fullName evidence="1">Nucleoside 5'-monophosphate phosphohydrolase</fullName>
    </alternativeName>
</protein>
<sequence length="262" mass="28331">MRVLVSNDDGVDAPGIKILADALRNAGHEVMVVAPDRDRSGASNSLTLDTPIRAKQIDMHTYSVAGTPTDCVHLALTGLLNYDPDIVVSGINNTGNLGDDVIYSGTVSAAMEGRFLGLPAVAVSLVTLCREGQQAPQYETAAHAAINIVAQLKTDPLPADTILNVNVPDVTWQQMRGFKVTRLGNRHRSAPCLTQTDPRGHTIYWIGPAGPEQDAGPGTDFDAVRNTYISITPIHVDLTRYQALENVTRWTDRLTAHMDWPT</sequence>
<organism>
    <name type="scientific">Xylella fastidiosa (strain M23)</name>
    <dbReference type="NCBI Taxonomy" id="405441"/>
    <lineage>
        <taxon>Bacteria</taxon>
        <taxon>Pseudomonadati</taxon>
        <taxon>Pseudomonadota</taxon>
        <taxon>Gammaproteobacteria</taxon>
        <taxon>Lysobacterales</taxon>
        <taxon>Lysobacteraceae</taxon>
        <taxon>Xylella</taxon>
    </lineage>
</organism>
<gene>
    <name evidence="1" type="primary">surE</name>
    <name type="ordered locus">XfasM23_1918</name>
</gene>
<evidence type="ECO:0000255" key="1">
    <source>
        <dbReference type="HAMAP-Rule" id="MF_00060"/>
    </source>
</evidence>
<keyword id="KW-0963">Cytoplasm</keyword>
<keyword id="KW-0378">Hydrolase</keyword>
<keyword id="KW-0479">Metal-binding</keyword>
<keyword id="KW-0547">Nucleotide-binding</keyword>
<accession>B2I8X7</accession>
<feature type="chain" id="PRO_1000092049" description="5'-nucleotidase SurE">
    <location>
        <begin position="1"/>
        <end position="262"/>
    </location>
</feature>
<feature type="binding site" evidence="1">
    <location>
        <position position="8"/>
    </location>
    <ligand>
        <name>a divalent metal cation</name>
        <dbReference type="ChEBI" id="CHEBI:60240"/>
    </ligand>
</feature>
<feature type="binding site" evidence="1">
    <location>
        <position position="9"/>
    </location>
    <ligand>
        <name>a divalent metal cation</name>
        <dbReference type="ChEBI" id="CHEBI:60240"/>
    </ligand>
</feature>
<feature type="binding site" evidence="1">
    <location>
        <position position="40"/>
    </location>
    <ligand>
        <name>a divalent metal cation</name>
        <dbReference type="ChEBI" id="CHEBI:60240"/>
    </ligand>
</feature>
<feature type="binding site" evidence="1">
    <location>
        <position position="92"/>
    </location>
    <ligand>
        <name>a divalent metal cation</name>
        <dbReference type="ChEBI" id="CHEBI:60240"/>
    </ligand>
</feature>
<name>SURE_XYLF2</name>
<proteinExistence type="inferred from homology"/>
<reference key="1">
    <citation type="journal article" date="2010" name="J. Bacteriol.">
        <title>Whole genome sequences of two Xylella fastidiosa strains (M12 and M23) causing almond leaf scorch disease in California.</title>
        <authorList>
            <person name="Chen J."/>
            <person name="Xie G."/>
            <person name="Han S."/>
            <person name="Chertkov O."/>
            <person name="Sims D."/>
            <person name="Civerolo E.L."/>
        </authorList>
    </citation>
    <scope>NUCLEOTIDE SEQUENCE [LARGE SCALE GENOMIC DNA]</scope>
    <source>
        <strain>M23</strain>
    </source>
</reference>